<proteinExistence type="evidence at protein level"/>
<evidence type="ECO:0000250" key="1"/>
<evidence type="ECO:0000255" key="2"/>
<evidence type="ECO:0000269" key="3">
    <source>
    </source>
</evidence>
<evidence type="ECO:0000269" key="4">
    <source>
    </source>
</evidence>
<evidence type="ECO:0000269" key="5">
    <source>
    </source>
</evidence>
<evidence type="ECO:0000305" key="6"/>
<evidence type="ECO:0007744" key="7">
    <source>
    </source>
</evidence>
<dbReference type="EMBL" id="D00752">
    <property type="protein sequence ID" value="BAA00649.1"/>
    <property type="molecule type" value="mRNA"/>
</dbReference>
<dbReference type="EMBL" id="BC088096">
    <property type="protein sequence ID" value="AAH88096.1"/>
    <property type="molecule type" value="mRNA"/>
</dbReference>
<dbReference type="EMBL" id="X16357">
    <property type="protein sequence ID" value="CAA34406.1"/>
    <property type="molecule type" value="mRNA"/>
</dbReference>
<dbReference type="EMBL" id="M15917">
    <property type="protein sequence ID" value="AAA42172.1"/>
    <property type="molecule type" value="mRNA"/>
</dbReference>
<dbReference type="PIR" id="S08102">
    <property type="entry name" value="S08102"/>
</dbReference>
<dbReference type="RefSeq" id="NP_001376144.2">
    <property type="nucleotide sequence ID" value="NM_001389215.2"/>
</dbReference>
<dbReference type="RefSeq" id="XP_038968003.1">
    <property type="nucleotide sequence ID" value="XM_039112075.2"/>
</dbReference>
<dbReference type="RefSeq" id="XP_038968004.1">
    <property type="nucleotide sequence ID" value="XM_039112076.2"/>
</dbReference>
<dbReference type="RefSeq" id="XP_038968005.1">
    <property type="nucleotide sequence ID" value="XM_039112077.1"/>
</dbReference>
<dbReference type="SMR" id="P05544"/>
<dbReference type="FunCoup" id="P05544">
    <property type="interactions" value="41"/>
</dbReference>
<dbReference type="MEROPS" id="I04.050"/>
<dbReference type="GlyCosmos" id="P05544">
    <property type="glycosylation" value="4 sites, No reported glycans"/>
</dbReference>
<dbReference type="GlyGen" id="P05544">
    <property type="glycosylation" value="5 sites, 1 O-linked glycan (1 site)"/>
</dbReference>
<dbReference type="iPTMnet" id="P05544"/>
<dbReference type="Ensembl" id="ENSRNOT00000087017.2">
    <property type="protein sequence ID" value="ENSRNOP00000070308.2"/>
    <property type="gene ID" value="ENSRNOG00000010478.8"/>
</dbReference>
<dbReference type="GeneID" id="299282"/>
<dbReference type="UCSC" id="RGD:3745">
    <property type="organism name" value="rat"/>
</dbReference>
<dbReference type="AGR" id="RGD:3745"/>
<dbReference type="RGD" id="3745">
    <property type="gene designation" value="Serpina3l"/>
</dbReference>
<dbReference type="GeneTree" id="ENSGT00940000154392"/>
<dbReference type="InParanoid" id="P05544"/>
<dbReference type="OMA" id="HEVNSWA"/>
<dbReference type="OrthoDB" id="671595at2759"/>
<dbReference type="PRO" id="PR:P05544"/>
<dbReference type="Proteomes" id="UP000002494">
    <property type="component" value="Chromosome 6"/>
</dbReference>
<dbReference type="GO" id="GO:0005615">
    <property type="term" value="C:extracellular space"/>
    <property type="evidence" value="ECO:0000318"/>
    <property type="project" value="GO_Central"/>
</dbReference>
<dbReference type="GO" id="GO:0004867">
    <property type="term" value="F:serine-type endopeptidase inhibitor activity"/>
    <property type="evidence" value="ECO:0000318"/>
    <property type="project" value="GO_Central"/>
</dbReference>
<dbReference type="GO" id="GO:0034097">
    <property type="term" value="P:response to cytokine"/>
    <property type="evidence" value="ECO:0000318"/>
    <property type="project" value="GO_Central"/>
</dbReference>
<dbReference type="CDD" id="cd19551">
    <property type="entry name" value="serpinA3_A1AC"/>
    <property type="match status" value="1"/>
</dbReference>
<dbReference type="FunFam" id="3.30.497.10:FF:000001">
    <property type="entry name" value="Serine protease inhibitor"/>
    <property type="match status" value="1"/>
</dbReference>
<dbReference type="FunFam" id="2.30.39.10:FF:000002">
    <property type="entry name" value="Serpin family D member 1"/>
    <property type="match status" value="1"/>
</dbReference>
<dbReference type="Gene3D" id="2.30.39.10">
    <property type="entry name" value="Alpha-1-antitrypsin, domain 1"/>
    <property type="match status" value="1"/>
</dbReference>
<dbReference type="Gene3D" id="3.30.497.10">
    <property type="entry name" value="Antithrombin, subunit I, domain 2"/>
    <property type="match status" value="1"/>
</dbReference>
<dbReference type="InterPro" id="IPR023795">
    <property type="entry name" value="Serpin_CS"/>
</dbReference>
<dbReference type="InterPro" id="IPR023796">
    <property type="entry name" value="Serpin_dom"/>
</dbReference>
<dbReference type="InterPro" id="IPR000215">
    <property type="entry name" value="Serpin_fam"/>
</dbReference>
<dbReference type="InterPro" id="IPR036186">
    <property type="entry name" value="Serpin_sf"/>
</dbReference>
<dbReference type="InterPro" id="IPR042178">
    <property type="entry name" value="Serpin_sf_1"/>
</dbReference>
<dbReference type="InterPro" id="IPR042185">
    <property type="entry name" value="Serpin_sf_2"/>
</dbReference>
<dbReference type="PANTHER" id="PTHR11461:SF195">
    <property type="entry name" value="SERINE PROTEASE INHIBITOR A3A-RELATED"/>
    <property type="match status" value="1"/>
</dbReference>
<dbReference type="PANTHER" id="PTHR11461">
    <property type="entry name" value="SERINE PROTEASE INHIBITOR, SERPIN"/>
    <property type="match status" value="1"/>
</dbReference>
<dbReference type="Pfam" id="PF00079">
    <property type="entry name" value="Serpin"/>
    <property type="match status" value="1"/>
</dbReference>
<dbReference type="SMART" id="SM00093">
    <property type="entry name" value="SERPIN"/>
    <property type="match status" value="1"/>
</dbReference>
<dbReference type="SUPFAM" id="SSF56574">
    <property type="entry name" value="Serpins"/>
    <property type="match status" value="1"/>
</dbReference>
<dbReference type="PROSITE" id="PS00284">
    <property type="entry name" value="SERPIN"/>
    <property type="match status" value="1"/>
</dbReference>
<accession>P05544</accession>
<sequence>MAFIAALGLLMAGICPAVLCDGTLGRDTLSHEDHGKGRQLHSLTLASSNTDFALSLYKKLALRNPDKNVVFSPLSISAALTILSLGAKDSTMEEILEGLKFNLTEITEEEIHQGFGHLLQRLSQPEDQVEINTGSALFIDKEQPILSEFQEKTRALYQAEAFIADFKQPNEAKKLINDYVSNQTQGKIAELFSDLEERTSMVLVNYLLFKGKWKVPFNPNDTFESEFYLDEKRSVKVPMMKIKEVTTPYVRDEELSCSVLELKYTGNASALFILPDQGKMQQVESSLQPETLKKWKDSLIPRIINDLRMPKFSISTDYSLKEVLPELGIKKVFSQQADLSRITGTKDLYVSQVVHKAVLDVDETGTEATAATGVATVIRRQPRTLNFNRPFMVVITDMDSQSILFVAKITNPK</sequence>
<protein>
    <recommendedName>
        <fullName>Serine protease inhibitor A3L</fullName>
        <shortName>Serpin A3L</shortName>
    </recommendedName>
    <alternativeName>
        <fullName>CPI-23</fullName>
    </alternativeName>
    <alternativeName>
        <fullName>Contrapsin-like protease inhibitor 3</fullName>
    </alternativeName>
    <alternativeName>
        <fullName>Serine protease inhibitor 1</fullName>
        <shortName>SPI-1</shortName>
    </alternativeName>
</protein>
<name>SPA3L_RAT</name>
<keyword id="KW-0903">Direct protein sequencing</keyword>
<keyword id="KW-0325">Glycoprotein</keyword>
<keyword id="KW-0597">Phosphoprotein</keyword>
<keyword id="KW-0646">Protease inhibitor</keyword>
<keyword id="KW-1185">Reference proteome</keyword>
<keyword id="KW-0964">Secreted</keyword>
<keyword id="KW-0722">Serine protease inhibitor</keyword>
<keyword id="KW-0732">Signal</keyword>
<feature type="signal peptide" evidence="2">
    <location>
        <begin position="1"/>
        <end position="28"/>
    </location>
</feature>
<feature type="chain" id="PRO_0000032422" description="Serine protease inhibitor A3L">
    <location>
        <begin position="29"/>
        <end position="413"/>
    </location>
</feature>
<feature type="region of interest" description="RCL">
    <location>
        <begin position="365"/>
        <end position="389"/>
    </location>
</feature>
<feature type="site" description="Reactive bond" evidence="1">
    <location>
        <begin position="379"/>
        <end position="380"/>
    </location>
</feature>
<feature type="modified residue" description="Phosphoserine" evidence="7">
    <location>
        <position position="30"/>
    </location>
</feature>
<feature type="glycosylation site" description="N-linked (GlcNAc...) asparagine" evidence="2">
    <location>
        <position position="102"/>
    </location>
</feature>
<feature type="glycosylation site" description="N-linked (GlcNAc...) asparagine" evidence="2">
    <location>
        <position position="182"/>
    </location>
</feature>
<feature type="glycosylation site" description="N-linked (GlcNAc...) asparagine" evidence="2">
    <location>
        <position position="220"/>
    </location>
</feature>
<feature type="glycosylation site" description="N-linked (GlcNAc...) asparagine" evidence="2">
    <location>
        <position position="267"/>
    </location>
</feature>
<feature type="sequence conflict" description="In Ref. 4; AAA42172." evidence="6" ref="4">
    <original>V</original>
    <variation>L</variation>
    <location>
        <position position="245"/>
    </location>
</feature>
<reference key="1">
    <citation type="journal article" date="1991" name="J. Biochem.">
        <title>Molecular cloning and characterization of rat contrapsin-like protease inhibitor and related proteins.</title>
        <authorList>
            <person name="Ohkubo K."/>
            <person name="Ogata S."/>
            <person name="Misumi Y."/>
            <person name="Takami N."/>
            <person name="Ikehara Y."/>
        </authorList>
    </citation>
    <scope>NUCLEOTIDE SEQUENCE [MRNA]</scope>
    <scope>TISSUE SPECIFICITY</scope>
    <source>
        <tissue>Liver</tissue>
    </source>
</reference>
<reference key="2">
    <citation type="journal article" date="2004" name="Genome Res.">
        <title>The status, quality, and expansion of the NIH full-length cDNA project: the Mammalian Gene Collection (MGC).</title>
        <authorList>
            <consortium name="The MGC Project Team"/>
        </authorList>
    </citation>
    <scope>NUCLEOTIDE SEQUENCE [LARGE SCALE MRNA]</scope>
    <source>
        <tissue>Liver</tissue>
    </source>
</reference>
<reference key="3">
    <citation type="journal article" date="1990" name="Eur. J. Biochem.">
        <title>Molecular characterization of three rat liver serine-protease inhibitors affected by inflammation and hypophysectomy. Protein and mRNA analysis and cDNA cloning.</title>
        <authorList>
            <person name="Pages G."/>
            <person name="Rouayrenc J.F."/>
            <person name="le Cam G."/>
            <person name="Mariller M."/>
            <person name="le Cam A."/>
        </authorList>
    </citation>
    <scope>NUCLEOTIDE SEQUENCE [MRNA] OF 11-413</scope>
    <scope>INDUCTION</scope>
    <scope>GLYCOSYLATION</scope>
    <source>
        <tissue>Liver</tissue>
    </source>
</reference>
<reference key="4">
    <citation type="journal article" date="1987" name="J. Biol. Chem.">
        <title>Growth hormone induces two mRNA species of the serine protease inhibitor gene family in rat liver.</title>
        <authorList>
            <person name="Yoon J.-B."/>
            <person name="Towle H.C."/>
            <person name="Seelig S."/>
        </authorList>
    </citation>
    <scope>NUCLEOTIDE SEQUENCE [MRNA] OF 82-403</scope>
    <scope>INDUCTION</scope>
    <source>
        <tissue>Liver</tissue>
    </source>
</reference>
<reference key="5">
    <citation type="submission" date="2007-09" db="UniProtKB">
        <authorList>
            <person name="Lubec G."/>
            <person name="Afjehi-Sadat L."/>
            <person name="Kang S.U."/>
            <person name="Lubec S."/>
        </authorList>
    </citation>
    <scope>PROTEIN SEQUENCE OF 142-152; 188-210 AND 233-241</scope>
    <scope>IDENTIFICATION BY MASS SPECTROMETRY</scope>
    <source>
        <strain>Sprague-Dawley</strain>
        <tissue>Brain</tissue>
        <tissue>Spinal cord</tissue>
    </source>
</reference>
<reference key="6">
    <citation type="journal article" date="2004" name="J. Mol. Evol.">
        <title>Expression patterns of murine antichymotrypsin-like genes reflect evolutionary divergence at the Serpina3 locus.</title>
        <authorList>
            <person name="Horvath A.J."/>
            <person name="Forsyth S.L."/>
            <person name="Coughlin P.B."/>
        </authorList>
    </citation>
    <scope>REGION RCL</scope>
</reference>
<reference key="7">
    <citation type="journal article" date="2012" name="Nat. Commun.">
        <title>Quantitative maps of protein phosphorylation sites across 14 different rat organs and tissues.</title>
        <authorList>
            <person name="Lundby A."/>
            <person name="Secher A."/>
            <person name="Lage K."/>
            <person name="Nordsborg N.B."/>
            <person name="Dmytriyev A."/>
            <person name="Lundby C."/>
            <person name="Olsen J.V."/>
        </authorList>
    </citation>
    <scope>PHOSPHORYLATION [LARGE SCALE ANALYSIS] AT SER-30</scope>
    <scope>IDENTIFICATION BY MASS SPECTROMETRY [LARGE SCALE ANALYSIS]</scope>
</reference>
<organism>
    <name type="scientific">Rattus norvegicus</name>
    <name type="common">Rat</name>
    <dbReference type="NCBI Taxonomy" id="10116"/>
    <lineage>
        <taxon>Eukaryota</taxon>
        <taxon>Metazoa</taxon>
        <taxon>Chordata</taxon>
        <taxon>Craniata</taxon>
        <taxon>Vertebrata</taxon>
        <taxon>Euteleostomi</taxon>
        <taxon>Mammalia</taxon>
        <taxon>Eutheria</taxon>
        <taxon>Euarchontoglires</taxon>
        <taxon>Glires</taxon>
        <taxon>Rodentia</taxon>
        <taxon>Myomorpha</taxon>
        <taxon>Muroidea</taxon>
        <taxon>Muridae</taxon>
        <taxon>Murinae</taxon>
        <taxon>Rattus</taxon>
    </lineage>
</organism>
<gene>
    <name type="primary">Serpina3l</name>
    <name type="synonym">Spin2a</name>
</gene>
<comment type="subcellular location">
    <subcellularLocation>
        <location evidence="1">Secreted</location>
    </subcellularLocation>
</comment>
<comment type="tissue specificity">
    <text evidence="4">Liver.</text>
</comment>
<comment type="induction">
    <text evidence="3 5">By growth hormone. Reduced during acute inflammation.</text>
</comment>
<comment type="domain">
    <text evidence="1">The reactive center loop (RCL) extends out from the body of the protein and directs binding to the target protease. The protease cleaves the serpin at the reactive site within the RCL, establishing a covalent linkage between the serpin reactive site and the protease. The resulting inactive serpin-protease complex is highly stable (By similarity). Variability within the reactive center loop (RCL) sequences of Serpina3 paralogs may determine target protease specificity.</text>
</comment>
<comment type="PTM">
    <text evidence="3">N-glycosylated.</text>
</comment>
<comment type="miscellaneous">
    <text>The single human alpha1-antichymotrypsin gene (SERPINA3) is represented by a cluster of 6 individual rat paralogs.</text>
</comment>
<comment type="similarity">
    <text evidence="6">Belongs to the serpin family.</text>
</comment>
<comment type="caution">
    <text evidence="6">It is uncertain whether Met-1 or Met-11 is the initiator.</text>
</comment>